<dbReference type="EC" id="3.1.3.16" evidence="9"/>
<dbReference type="EMBL" id="BX284601">
    <property type="protein sequence ID" value="CAD30428.2"/>
    <property type="molecule type" value="Genomic_DNA"/>
</dbReference>
<dbReference type="EMBL" id="BX284601">
    <property type="protein sequence ID" value="CAD30429.2"/>
    <property type="molecule type" value="Genomic_DNA"/>
</dbReference>
<dbReference type="EMBL" id="BX284601">
    <property type="protein sequence ID" value="CAN99655.1"/>
    <property type="molecule type" value="Genomic_DNA"/>
</dbReference>
<dbReference type="RefSeq" id="NP_001122411.1">
    <molecule id="Q8T3G2-3"/>
    <property type="nucleotide sequence ID" value="NM_001128939.3"/>
</dbReference>
<dbReference type="RefSeq" id="NP_001370133.1">
    <molecule id="Q8T3G2-2"/>
    <property type="nucleotide sequence ID" value="NM_001383711.2"/>
</dbReference>
<dbReference type="RefSeq" id="NP_740911.2">
    <property type="nucleotide sequence ID" value="NM_170917.4"/>
</dbReference>
<dbReference type="RefSeq" id="NP_740912.2">
    <molecule id="Q8T3G2-1"/>
    <property type="nucleotide sequence ID" value="NM_170918.7"/>
</dbReference>
<dbReference type="SMR" id="Q8T3G2"/>
<dbReference type="DIP" id="DIP-25609N"/>
<dbReference type="FunCoup" id="Q8T3G2">
    <property type="interactions" value="411"/>
</dbReference>
<dbReference type="STRING" id="6239.B0379.4b.1"/>
<dbReference type="PaxDb" id="6239-B0379.4b"/>
<dbReference type="PeptideAtlas" id="Q8T3G2"/>
<dbReference type="EnsemblMetazoa" id="B0379.4a.1">
    <molecule id="Q8T3G2-2"/>
    <property type="protein sequence ID" value="B0379.4a.1"/>
    <property type="gene ID" value="WBGene00007054"/>
</dbReference>
<dbReference type="EnsemblMetazoa" id="B0379.4b.1">
    <molecule id="Q8T3G2-1"/>
    <property type="protein sequence ID" value="B0379.4b.1"/>
    <property type="gene ID" value="WBGene00007054"/>
</dbReference>
<dbReference type="EnsemblMetazoa" id="B0379.4c.1">
    <molecule id="Q8T3G2-3"/>
    <property type="protein sequence ID" value="B0379.4c.1"/>
    <property type="gene ID" value="WBGene00007054"/>
</dbReference>
<dbReference type="GeneID" id="181944"/>
<dbReference type="KEGG" id="cel:CELE_B0379.4"/>
<dbReference type="UCSC" id="B0379.4c">
    <property type="organism name" value="c. elegans"/>
</dbReference>
<dbReference type="AGR" id="WB:WBGene00007054"/>
<dbReference type="CTD" id="181944"/>
<dbReference type="WormBase" id="B0379.4a">
    <molecule id="Q8T3G2-2"/>
    <property type="protein sequence ID" value="CE34243"/>
    <property type="gene ID" value="WBGene00007054"/>
    <property type="gene designation" value="scpl-1"/>
</dbReference>
<dbReference type="WormBase" id="B0379.4b">
    <molecule id="Q8T3G2-1"/>
    <property type="protein sequence ID" value="CE34244"/>
    <property type="gene ID" value="WBGene00007054"/>
    <property type="gene designation" value="scpl-1"/>
</dbReference>
<dbReference type="WormBase" id="B0379.4c">
    <molecule id="Q8T3G2-3"/>
    <property type="protein sequence ID" value="CE41191"/>
    <property type="gene ID" value="WBGene00007054"/>
    <property type="gene designation" value="scpl-1"/>
</dbReference>
<dbReference type="eggNOG" id="KOG1605">
    <property type="taxonomic scope" value="Eukaryota"/>
</dbReference>
<dbReference type="GeneTree" id="ENSGT01040000240451"/>
<dbReference type="HOGENOM" id="CLU_041593_0_0_1"/>
<dbReference type="InParanoid" id="Q8T3G2"/>
<dbReference type="OMA" id="LCHKESE"/>
<dbReference type="OrthoDB" id="277011at2759"/>
<dbReference type="PhylomeDB" id="Q8T3G2"/>
<dbReference type="PRO" id="PR:Q8T3G2"/>
<dbReference type="Proteomes" id="UP000001940">
    <property type="component" value="Chromosome I"/>
</dbReference>
<dbReference type="Bgee" id="WBGene00007054">
    <property type="expression patterns" value="Expressed in larva and 3 other cell types or tissues"/>
</dbReference>
<dbReference type="GO" id="GO:0031674">
    <property type="term" value="C:I band"/>
    <property type="evidence" value="ECO:0000314"/>
    <property type="project" value="WormBase"/>
</dbReference>
<dbReference type="GO" id="GO:0031430">
    <property type="term" value="C:M band"/>
    <property type="evidence" value="ECO:0000314"/>
    <property type="project" value="WormBase"/>
</dbReference>
<dbReference type="GO" id="GO:0019900">
    <property type="term" value="F:kinase binding"/>
    <property type="evidence" value="ECO:0000353"/>
    <property type="project" value="WormBase"/>
</dbReference>
<dbReference type="GO" id="GO:0030274">
    <property type="term" value="F:LIM domain binding"/>
    <property type="evidence" value="ECO:0000353"/>
    <property type="project" value="WormBase"/>
</dbReference>
<dbReference type="GO" id="GO:0046872">
    <property type="term" value="F:metal ion binding"/>
    <property type="evidence" value="ECO:0007669"/>
    <property type="project" value="UniProtKB-KW"/>
</dbReference>
<dbReference type="GO" id="GO:0016791">
    <property type="term" value="F:phosphatase activity"/>
    <property type="evidence" value="ECO:0000314"/>
    <property type="project" value="WormBase"/>
</dbReference>
<dbReference type="GO" id="GO:0030674">
    <property type="term" value="F:protein-macromolecule adaptor activity"/>
    <property type="evidence" value="ECO:0000353"/>
    <property type="project" value="WormBase"/>
</dbReference>
<dbReference type="GO" id="GO:0008420">
    <property type="term" value="F:RNA polymerase II CTD heptapeptide repeat phosphatase activity"/>
    <property type="evidence" value="ECO:0000318"/>
    <property type="project" value="GO_Central"/>
</dbReference>
<dbReference type="GO" id="GO:0016311">
    <property type="term" value="P:dephosphorylation"/>
    <property type="evidence" value="ECO:0000314"/>
    <property type="project" value="WormBase"/>
</dbReference>
<dbReference type="GO" id="GO:0046662">
    <property type="term" value="P:regulation of egg-laying behavior"/>
    <property type="evidence" value="ECO:0000315"/>
    <property type="project" value="WormBase"/>
</dbReference>
<dbReference type="CDD" id="cd07521">
    <property type="entry name" value="HAD_FCP1-like"/>
    <property type="match status" value="1"/>
</dbReference>
<dbReference type="FunFam" id="3.40.50.1000:FF:000192">
    <property type="entry name" value="CTD small phosphatase-like protein"/>
    <property type="match status" value="1"/>
</dbReference>
<dbReference type="Gene3D" id="3.40.50.1000">
    <property type="entry name" value="HAD superfamily/HAD-like"/>
    <property type="match status" value="1"/>
</dbReference>
<dbReference type="InterPro" id="IPR011948">
    <property type="entry name" value="Dullard_phosphatase"/>
</dbReference>
<dbReference type="InterPro" id="IPR004274">
    <property type="entry name" value="FCP1_dom"/>
</dbReference>
<dbReference type="InterPro" id="IPR036412">
    <property type="entry name" value="HAD-like_sf"/>
</dbReference>
<dbReference type="InterPro" id="IPR023214">
    <property type="entry name" value="HAD_sf"/>
</dbReference>
<dbReference type="InterPro" id="IPR040078">
    <property type="entry name" value="RNA_Pol_CTD_Phosphatase"/>
</dbReference>
<dbReference type="InterPro" id="IPR050365">
    <property type="entry name" value="TIM50"/>
</dbReference>
<dbReference type="NCBIfam" id="TIGR02251">
    <property type="entry name" value="HIF-SF_euk"/>
    <property type="match status" value="1"/>
</dbReference>
<dbReference type="PANTHER" id="PTHR12210">
    <property type="entry name" value="DULLARD PROTEIN PHOSPHATASE"/>
    <property type="match status" value="1"/>
</dbReference>
<dbReference type="Pfam" id="PF03031">
    <property type="entry name" value="NIF"/>
    <property type="match status" value="1"/>
</dbReference>
<dbReference type="SFLD" id="SFLDG01124">
    <property type="entry name" value="C0.1:_RNA_Pol_CTD_Phosphatase"/>
    <property type="match status" value="1"/>
</dbReference>
<dbReference type="SFLD" id="SFLDS00003">
    <property type="entry name" value="Haloacid_Dehalogenase"/>
    <property type="match status" value="1"/>
</dbReference>
<dbReference type="SMART" id="SM00577">
    <property type="entry name" value="CPDc"/>
    <property type="match status" value="1"/>
</dbReference>
<dbReference type="SUPFAM" id="SSF56784">
    <property type="entry name" value="HAD-like"/>
    <property type="match status" value="1"/>
</dbReference>
<dbReference type="PROSITE" id="PS50969">
    <property type="entry name" value="FCP1"/>
    <property type="match status" value="1"/>
</dbReference>
<name>SCPL1_CAEEL</name>
<gene>
    <name evidence="7 12" type="primary">scpl-1</name>
    <name evidence="12" type="ORF">B0379.4</name>
</gene>
<sequence>MTYAESTRSAVVYSSIVPPPRTPVGPPMLKDGVRKGSASQPLQPKNGANSLDYWSKSEDEKSGITCYYSRHNIQFPPPQRKMKPVKPNPVGRSTINGFTPSTSSPQNGLRYPPFPQNTPESVMSPPVGIYRNIPAMPRAKLTKDEKNGGKMNRDGGGENPKNVVWGGTSRKDDDTASTPLNSFSANASIEKKRSTARRKPRWARCFQTLFCCVTPPREIEKIQSSQRTNSTNNNHQNGRPSTPTNTGPPIQLITQVHRDGTVTGLPTTGQACQQNGSGDGVTPYDKIANDSVGTINEKPLLPPLLPQDSNKKCLVIDLDETLVHSSFKPVKNPDFVIPVEIDGVEHQVYVLKRPYVDEFLAKVGEHFECILFTASLAKYADPVADLLDKKRVFRGRLFREACVFHKGNYVKDLSRLGRNLNQTLIIDNSPASYAFHPENAVPVTTWFDDPSDTELLDILPSLEHLNGFSSIYDLYRPEEGPQSELLNHCSC</sequence>
<accession>Q8T3G2</accession>
<accession>A5Z2W8</accession>
<accession>Q8T3G3</accession>
<protein>
    <recommendedName>
        <fullName evidence="7">CTD small phosphatase-like protein 1</fullName>
        <shortName evidence="7">SCP-like 1</shortName>
        <ecNumber evidence="9">3.1.3.16</ecNumber>
    </recommendedName>
</protein>
<comment type="function">
    <text evidence="4 5">Phosphatase which may play a role in the egg laying muscles.</text>
</comment>
<comment type="catalytic activity">
    <reaction evidence="9">
        <text>O-phospho-L-seryl-[protein] + H2O = L-seryl-[protein] + phosphate</text>
        <dbReference type="Rhea" id="RHEA:20629"/>
        <dbReference type="Rhea" id="RHEA-COMP:9863"/>
        <dbReference type="Rhea" id="RHEA-COMP:11604"/>
        <dbReference type="ChEBI" id="CHEBI:15377"/>
        <dbReference type="ChEBI" id="CHEBI:29999"/>
        <dbReference type="ChEBI" id="CHEBI:43474"/>
        <dbReference type="ChEBI" id="CHEBI:83421"/>
        <dbReference type="EC" id="3.1.3.16"/>
    </reaction>
</comment>
<comment type="catalytic activity">
    <reaction evidence="9">
        <text>O-phospho-L-threonyl-[protein] + H2O = L-threonyl-[protein] + phosphate</text>
        <dbReference type="Rhea" id="RHEA:47004"/>
        <dbReference type="Rhea" id="RHEA-COMP:11060"/>
        <dbReference type="Rhea" id="RHEA-COMP:11605"/>
        <dbReference type="ChEBI" id="CHEBI:15377"/>
        <dbReference type="ChEBI" id="CHEBI:30013"/>
        <dbReference type="ChEBI" id="CHEBI:43474"/>
        <dbReference type="ChEBI" id="CHEBI:61977"/>
        <dbReference type="EC" id="3.1.3.16"/>
    </reaction>
</comment>
<comment type="cofactor">
    <cofactor evidence="4">
        <name>Mg(2+)</name>
        <dbReference type="ChEBI" id="CHEBI:18420"/>
    </cofactor>
    <text evidence="4">May also use Mn(2+).</text>
</comment>
<comment type="activity regulation">
    <text evidence="4">Inhibited by beryllium trifluoride (BeF(3-)) and tetrafluoroaluminate (AlF(4-)) but not by sodium fluoride (NaF) or sodium orthovanadate (Na3VO4).</text>
</comment>
<comment type="biophysicochemical properties">
    <phDependence>
        <text evidence="4">Optimum pH is 5.</text>
    </phDependence>
</comment>
<comment type="subunit">
    <text evidence="4 5 6">May interact (via phosphatase domain) with cpna-1 (PubMed:23283987). Isoform a and isoform b may interact with lim-9 (via LIM zinc-binding domain) (PubMed:19244614). Isoform a and isoform b may interact (via FCP1 homology domain) with unc-89 (via fibronectin type-III domain 1, Ig-like C2-type domain 48/49 and protein kinase domain 1 or Ig-like C2-type domain 50, fibronectin type-III domain 2 and protein kinase domain 2); the interaction may act as a molecular bridge to bring two unc-89 molecules together or to stabilize a loop between the 2 protein kinase domains (PubMed:18337465, PubMed:19244614).</text>
</comment>
<comment type="subcellular location">
    <subcellularLocation>
        <location evidence="4">Cytoplasm</location>
        <location evidence="4">Myofibril</location>
        <location evidence="4">Sarcomere</location>
        <location evidence="4">M line</location>
    </subcellularLocation>
    <text evidence="4">Colocalizes with unc-89 at M line.</text>
</comment>
<comment type="alternative products">
    <event type="alternative splicing"/>
    <isoform>
        <id>Q8T3G2-1</id>
        <name evidence="12">b</name>
        <sequence type="displayed"/>
    </isoform>
    <isoform>
        <id>Q8T3G2-2</id>
        <name evidence="11">a</name>
        <sequence type="described" ref="VSP_058740"/>
    </isoform>
    <isoform>
        <id>Q8T3G2-3</id>
        <name evidence="13">c</name>
        <sequence type="described" ref="VSP_058739"/>
    </isoform>
</comment>
<comment type="tissue specificity">
    <molecule>Isoform b</molecule>
    <text evidence="4">Expressed in pharyngeal, vulval and body wall muscles.</text>
</comment>
<comment type="disruption phenotype">
    <text evidence="4 5 6">Both RNAi-mediated knockdown of isoform a and of isoform b decreases egg laying triggered by serotonin treatment (PubMed:18337465). Causes no visible defects in unc-89 and cpna-1 localization in body wall muscles (PubMed:19244614, PubMed:23283987).</text>
</comment>
<reference evidence="10" key="1">
    <citation type="journal article" date="1998" name="Science">
        <title>Genome sequence of the nematode C. elegans: a platform for investigating biology.</title>
        <authorList>
            <consortium name="The C. elegans sequencing consortium"/>
        </authorList>
    </citation>
    <scope>NUCLEOTIDE SEQUENCE [LARGE SCALE GENOMIC DNA]</scope>
    <source>
        <strain evidence="10">Bristol N2</strain>
    </source>
</reference>
<reference evidence="8" key="2">
    <citation type="journal article" date="2008" name="Mol. Biol. Cell">
        <title>A novel protein phosphatase is a binding partner for the protein kinase domains of UNC-89 (Obscurin) in Caenorhabditis elegans.</title>
        <authorList>
            <person name="Qadota H."/>
            <person name="McGaha L.A."/>
            <person name="Mercer K.B."/>
            <person name="Stark T.J."/>
            <person name="Ferrara T.M."/>
            <person name="Benian G.M."/>
        </authorList>
    </citation>
    <scope>FUNCTION</scope>
    <scope>COFACTOR</scope>
    <scope>CATALYTIC ACTIVITY</scope>
    <scope>ACTIVITY REGULATION</scope>
    <scope>BIOPHYSICOCHEMICAL PROPERTIES</scope>
    <scope>INTERACTION WITH UNC-89</scope>
    <scope>SUBCELLULAR LOCATION</scope>
    <scope>TISSUE SPECIFICITY</scope>
    <scope>DISRUPTION PHENOTYPE</scope>
</reference>
<reference evidence="8" key="3">
    <citation type="journal article" date="2009" name="J. Mol. Biol.">
        <title>A LIM-9 (FHL)/SCPL-1 (SCP) complex interacts with the C-terminal protein kinase regions of UNC-89 (obscurin) in Caenorhabditis elegans muscle.</title>
        <authorList>
            <person name="Xiong G."/>
            <person name="Qadota H."/>
            <person name="Mercer K.B."/>
            <person name="McGaha L.A."/>
            <person name="Oberhauser A.F."/>
            <person name="Benian G.M."/>
        </authorList>
    </citation>
    <scope>FUNCTION</scope>
    <scope>INTERACTION WITH UNC-89 AND LIM-9</scope>
    <scope>DISRUPTION PHENOTYPE</scope>
</reference>
<reference evidence="8" key="4">
    <citation type="journal article" date="2013" name="Mol. Biol. Cell">
        <title>CPNA-1, a copine domain protein, is located at integrin adhesion sites and is required for myofilament stability in Caenorhabditis elegans.</title>
        <authorList>
            <person name="Warner A."/>
            <person name="Xiong G."/>
            <person name="Qadota H."/>
            <person name="Rogalski T."/>
            <person name="Vogl A.W."/>
            <person name="Moerman D.G."/>
            <person name="Benian G.M."/>
        </authorList>
    </citation>
    <scope>INTERACTION WITH CPNA-1</scope>
</reference>
<feature type="chain" id="PRO_0000438739" description="CTD small phosphatase-like protein 1" evidence="8">
    <location>
        <begin position="1"/>
        <end position="491"/>
    </location>
</feature>
<feature type="domain" description="FCP1 homology" evidence="2">
    <location>
        <begin position="307"/>
        <end position="465"/>
    </location>
</feature>
<feature type="region of interest" description="Disordered" evidence="3">
    <location>
        <begin position="1"/>
        <end position="53"/>
    </location>
</feature>
<feature type="region of interest" description="Disordered" evidence="3">
    <location>
        <begin position="140"/>
        <end position="198"/>
    </location>
</feature>
<feature type="region of interest" description="Disordered" evidence="3">
    <location>
        <begin position="221"/>
        <end position="249"/>
    </location>
</feature>
<feature type="region of interest" description="Disordered" evidence="3">
    <location>
        <begin position="261"/>
        <end position="282"/>
    </location>
</feature>
<feature type="compositionally biased region" description="Pro residues" evidence="3">
    <location>
        <begin position="17"/>
        <end position="26"/>
    </location>
</feature>
<feature type="compositionally biased region" description="Polar residues" evidence="3">
    <location>
        <begin position="37"/>
        <end position="49"/>
    </location>
</feature>
<feature type="compositionally biased region" description="Basic and acidic residues" evidence="3">
    <location>
        <begin position="141"/>
        <end position="156"/>
    </location>
</feature>
<feature type="compositionally biased region" description="Polar residues" evidence="3">
    <location>
        <begin position="176"/>
        <end position="187"/>
    </location>
</feature>
<feature type="compositionally biased region" description="Low complexity" evidence="3">
    <location>
        <begin position="223"/>
        <end position="237"/>
    </location>
</feature>
<feature type="compositionally biased region" description="Polar residues" evidence="3">
    <location>
        <begin position="238"/>
        <end position="249"/>
    </location>
</feature>
<feature type="compositionally biased region" description="Polar residues" evidence="3">
    <location>
        <begin position="264"/>
        <end position="276"/>
    </location>
</feature>
<feature type="active site" description="4-aspartylphosphate intermediate" evidence="1">
    <location>
        <position position="317"/>
    </location>
</feature>
<feature type="active site" description="Proton donor" evidence="1">
    <location>
        <position position="319"/>
    </location>
</feature>
<feature type="binding site" evidence="1">
    <location>
        <position position="317"/>
    </location>
    <ligand>
        <name>Mg(2+)</name>
        <dbReference type="ChEBI" id="CHEBI:18420"/>
    </ligand>
</feature>
<feature type="binding site" evidence="1">
    <location>
        <position position="319"/>
    </location>
    <ligand>
        <name>Mg(2+)</name>
        <dbReference type="ChEBI" id="CHEBI:18420"/>
    </ligand>
</feature>
<feature type="binding site" evidence="1">
    <location>
        <position position="428"/>
    </location>
    <ligand>
        <name>Mg(2+)</name>
        <dbReference type="ChEBI" id="CHEBI:18420"/>
    </ligand>
</feature>
<feature type="site" description="Transition state stabilizer" evidence="1">
    <location>
        <position position="373"/>
    </location>
</feature>
<feature type="site" description="Transition state stabilizer" evidence="1">
    <location>
        <position position="411"/>
    </location>
</feature>
<feature type="splice variant" id="VSP_058739" description="In isoform c." evidence="8">
    <original>MTYAESTRSAVVYSSIVPPPRTPVGPPMLKDGVRKGSASQPLQPKNGANSLDYWSKSEDEKSGITCYYSRHNIQFPPPQRKMKPVKPNPVGRSTINGFTPSTSSPQNGLRYPPFPQNTPESVMSPPVGIYRNIPAMPRAKLTKDEKNGGKMNRDGGGENPKNVVWGGTSRKDDDTASTPLNSFSANASIEKKRSTARRKPRWARCFQTLFCCVTPPREIEKIQSSQRTNSTNNNHQNGRPSTPTNTGPPIQLITQVHRDGTVTGLPTTGQACQQNGSGDGVTPYDKIANDSV</original>
    <variation>MREPQHVKRKQLMFQDEFDYRLNYRELIEWKPGRTPSALEIIELGLLHCKK</variation>
    <location>
        <begin position="1"/>
        <end position="292"/>
    </location>
</feature>
<feature type="splice variant" id="VSP_058740" description="In isoform a." evidence="8">
    <original>MTYAESTRSAVVYSSIVPPPRTPVGPPMLKDGVRKGSASQPLQPKNGANSLDYWSKSEDEKSGITCYYSRHNIQFPPPQRKMKPVKPNPVGRSTINGFTPSTSSPQNGLRYPPFPQNTPESVMSPPVGIYRNIPAMPRAKLTKDEKNGGKMNRDGGGENPKNVVWGGTSRKDDDTASTPLNSFSANA</original>
    <variation>MNNGYGVQAATETTISDSSADVSFVKPIGQVAGADFIKQTS</variation>
    <location>
        <begin position="1"/>
        <end position="187"/>
    </location>
</feature>
<keyword id="KW-0025">Alternative splicing</keyword>
<keyword id="KW-0963">Cytoplasm</keyword>
<keyword id="KW-0378">Hydrolase</keyword>
<keyword id="KW-0460">Magnesium</keyword>
<keyword id="KW-0479">Metal-binding</keyword>
<keyword id="KW-0904">Protein phosphatase</keyword>
<keyword id="KW-1185">Reference proteome</keyword>
<proteinExistence type="evidence at protein level"/>
<organism evidence="10">
    <name type="scientific">Caenorhabditis elegans</name>
    <dbReference type="NCBI Taxonomy" id="6239"/>
    <lineage>
        <taxon>Eukaryota</taxon>
        <taxon>Metazoa</taxon>
        <taxon>Ecdysozoa</taxon>
        <taxon>Nematoda</taxon>
        <taxon>Chromadorea</taxon>
        <taxon>Rhabditida</taxon>
        <taxon>Rhabditina</taxon>
        <taxon>Rhabditomorpha</taxon>
        <taxon>Rhabditoidea</taxon>
        <taxon>Rhabditidae</taxon>
        <taxon>Peloderinae</taxon>
        <taxon>Caenorhabditis</taxon>
    </lineage>
</organism>
<evidence type="ECO:0000250" key="1">
    <source>
        <dbReference type="UniProtKB" id="Q9GZU7"/>
    </source>
</evidence>
<evidence type="ECO:0000255" key="2">
    <source>
        <dbReference type="PROSITE-ProRule" id="PRU00336"/>
    </source>
</evidence>
<evidence type="ECO:0000256" key="3">
    <source>
        <dbReference type="SAM" id="MobiDB-lite"/>
    </source>
</evidence>
<evidence type="ECO:0000269" key="4">
    <source>
    </source>
</evidence>
<evidence type="ECO:0000269" key="5">
    <source>
    </source>
</evidence>
<evidence type="ECO:0000269" key="6">
    <source>
    </source>
</evidence>
<evidence type="ECO:0000303" key="7">
    <source>
    </source>
</evidence>
<evidence type="ECO:0000305" key="8"/>
<evidence type="ECO:0000305" key="9">
    <source>
    </source>
</evidence>
<evidence type="ECO:0000312" key="10">
    <source>
        <dbReference type="Proteomes" id="UP000001940"/>
    </source>
</evidence>
<evidence type="ECO:0000312" key="11">
    <source>
        <dbReference type="WormBase" id="B0379.4a"/>
    </source>
</evidence>
<evidence type="ECO:0000312" key="12">
    <source>
        <dbReference type="WormBase" id="B0379.4b"/>
    </source>
</evidence>
<evidence type="ECO:0000312" key="13">
    <source>
        <dbReference type="WormBase" id="B0379.4c"/>
    </source>
</evidence>